<feature type="chain" id="PRO_0000302279" description="Large ribosomal subunit protein bL36">
    <location>
        <begin position="1"/>
        <end position="38"/>
    </location>
</feature>
<sequence length="38" mass="4378">MKVLASVKRICRNCKIIKRNGVVRVICSSDPRHKQRQG</sequence>
<proteinExistence type="inferred from homology"/>
<keyword id="KW-1185">Reference proteome</keyword>
<keyword id="KW-0687">Ribonucleoprotein</keyword>
<keyword id="KW-0689">Ribosomal protein</keyword>
<comment type="similarity">
    <text evidence="1">Belongs to the bacterial ribosomal protein bL36 family.</text>
</comment>
<protein>
    <recommendedName>
        <fullName evidence="1">Large ribosomal subunit protein bL36</fullName>
    </recommendedName>
    <alternativeName>
        <fullName evidence="2">50S ribosomal protein L36</fullName>
    </alternativeName>
</protein>
<organism>
    <name type="scientific">Cupriavidus metallidurans (strain ATCC 43123 / DSM 2839 / NBRC 102507 / CH34)</name>
    <name type="common">Ralstonia metallidurans</name>
    <dbReference type="NCBI Taxonomy" id="266264"/>
    <lineage>
        <taxon>Bacteria</taxon>
        <taxon>Pseudomonadati</taxon>
        <taxon>Pseudomonadota</taxon>
        <taxon>Betaproteobacteria</taxon>
        <taxon>Burkholderiales</taxon>
        <taxon>Burkholderiaceae</taxon>
        <taxon>Cupriavidus</taxon>
    </lineage>
</organism>
<dbReference type="EMBL" id="CP000352">
    <property type="protein sequence ID" value="ABF10167.1"/>
    <property type="molecule type" value="Genomic_DNA"/>
</dbReference>
<dbReference type="RefSeq" id="WP_008642959.1">
    <property type="nucleotide sequence ID" value="NC_007973.1"/>
</dbReference>
<dbReference type="SMR" id="Q1LI59"/>
<dbReference type="STRING" id="266264.Rmet_3295"/>
<dbReference type="GeneID" id="98344088"/>
<dbReference type="KEGG" id="rme:Rmet_3295"/>
<dbReference type="eggNOG" id="COG0257">
    <property type="taxonomic scope" value="Bacteria"/>
</dbReference>
<dbReference type="HOGENOM" id="CLU_135723_6_2_4"/>
<dbReference type="Proteomes" id="UP000002429">
    <property type="component" value="Chromosome"/>
</dbReference>
<dbReference type="GO" id="GO:0005737">
    <property type="term" value="C:cytoplasm"/>
    <property type="evidence" value="ECO:0007669"/>
    <property type="project" value="UniProtKB-ARBA"/>
</dbReference>
<dbReference type="GO" id="GO:1990904">
    <property type="term" value="C:ribonucleoprotein complex"/>
    <property type="evidence" value="ECO:0007669"/>
    <property type="project" value="UniProtKB-KW"/>
</dbReference>
<dbReference type="GO" id="GO:0005840">
    <property type="term" value="C:ribosome"/>
    <property type="evidence" value="ECO:0007669"/>
    <property type="project" value="UniProtKB-KW"/>
</dbReference>
<dbReference type="GO" id="GO:0003735">
    <property type="term" value="F:structural constituent of ribosome"/>
    <property type="evidence" value="ECO:0007669"/>
    <property type="project" value="InterPro"/>
</dbReference>
<dbReference type="GO" id="GO:0006412">
    <property type="term" value="P:translation"/>
    <property type="evidence" value="ECO:0007669"/>
    <property type="project" value="UniProtKB-UniRule"/>
</dbReference>
<dbReference type="HAMAP" id="MF_00251">
    <property type="entry name" value="Ribosomal_bL36"/>
    <property type="match status" value="1"/>
</dbReference>
<dbReference type="InterPro" id="IPR000473">
    <property type="entry name" value="Ribosomal_bL36"/>
</dbReference>
<dbReference type="InterPro" id="IPR035977">
    <property type="entry name" value="Ribosomal_bL36_sp"/>
</dbReference>
<dbReference type="NCBIfam" id="TIGR01022">
    <property type="entry name" value="rpmJ_bact"/>
    <property type="match status" value="1"/>
</dbReference>
<dbReference type="PANTHER" id="PTHR42888">
    <property type="entry name" value="50S RIBOSOMAL PROTEIN L36, CHLOROPLASTIC"/>
    <property type="match status" value="1"/>
</dbReference>
<dbReference type="PANTHER" id="PTHR42888:SF1">
    <property type="entry name" value="LARGE RIBOSOMAL SUBUNIT PROTEIN BL36C"/>
    <property type="match status" value="1"/>
</dbReference>
<dbReference type="Pfam" id="PF00444">
    <property type="entry name" value="Ribosomal_L36"/>
    <property type="match status" value="1"/>
</dbReference>
<dbReference type="SUPFAM" id="SSF57840">
    <property type="entry name" value="Ribosomal protein L36"/>
    <property type="match status" value="1"/>
</dbReference>
<dbReference type="PROSITE" id="PS00828">
    <property type="entry name" value="RIBOSOMAL_L36"/>
    <property type="match status" value="1"/>
</dbReference>
<evidence type="ECO:0000255" key="1">
    <source>
        <dbReference type="HAMAP-Rule" id="MF_00251"/>
    </source>
</evidence>
<evidence type="ECO:0000305" key="2"/>
<reference key="1">
    <citation type="journal article" date="2010" name="PLoS ONE">
        <title>The complete genome sequence of Cupriavidus metallidurans strain CH34, a master survivalist in harsh and anthropogenic environments.</title>
        <authorList>
            <person name="Janssen P.J."/>
            <person name="Van Houdt R."/>
            <person name="Moors H."/>
            <person name="Monsieurs P."/>
            <person name="Morin N."/>
            <person name="Michaux A."/>
            <person name="Benotmane M.A."/>
            <person name="Leys N."/>
            <person name="Vallaeys T."/>
            <person name="Lapidus A."/>
            <person name="Monchy S."/>
            <person name="Medigue C."/>
            <person name="Taghavi S."/>
            <person name="McCorkle S."/>
            <person name="Dunn J."/>
            <person name="van der Lelie D."/>
            <person name="Mergeay M."/>
        </authorList>
    </citation>
    <scope>NUCLEOTIDE SEQUENCE [LARGE SCALE GENOMIC DNA]</scope>
    <source>
        <strain>ATCC 43123 / DSM 2839 / NBRC 102507 / CH34</strain>
    </source>
</reference>
<name>RL36_CUPMC</name>
<accession>Q1LI59</accession>
<gene>
    <name evidence="1" type="primary">rpmJ</name>
    <name type="ordered locus">Rmet_3295</name>
</gene>